<accession>P00888</accession>
<accession>Q47061</accession>
<name>AROF_ECOLI</name>
<organism>
    <name type="scientific">Escherichia coli (strain K12)</name>
    <dbReference type="NCBI Taxonomy" id="83333"/>
    <lineage>
        <taxon>Bacteria</taxon>
        <taxon>Pseudomonadati</taxon>
        <taxon>Pseudomonadota</taxon>
        <taxon>Gammaproteobacteria</taxon>
        <taxon>Enterobacterales</taxon>
        <taxon>Enterobacteriaceae</taxon>
        <taxon>Escherichia</taxon>
    </lineage>
</organism>
<dbReference type="EC" id="2.5.1.54"/>
<dbReference type="EMBL" id="K01989">
    <property type="protein sequence ID" value="AAA23489.1"/>
    <property type="molecule type" value="Genomic_DNA"/>
</dbReference>
<dbReference type="EMBL" id="M10431">
    <property type="protein sequence ID" value="AAA24332.1"/>
    <property type="molecule type" value="Genomic_DNA"/>
</dbReference>
<dbReference type="EMBL" id="U00096">
    <property type="protein sequence ID" value="AAC75650.1"/>
    <property type="molecule type" value="Genomic_DNA"/>
</dbReference>
<dbReference type="EMBL" id="AP009048">
    <property type="protein sequence ID" value="BAA16487.1"/>
    <property type="molecule type" value="Genomic_DNA"/>
</dbReference>
<dbReference type="EMBL" id="M60890">
    <property type="protein sequence ID" value="AAA23491.1"/>
    <property type="molecule type" value="Genomic_DNA"/>
</dbReference>
<dbReference type="EMBL" id="K03453">
    <property type="protein sequence ID" value="AAA23490.1"/>
    <property type="molecule type" value="Genomic_DNA"/>
</dbReference>
<dbReference type="PIR" id="I41141">
    <property type="entry name" value="ADECHY"/>
</dbReference>
<dbReference type="RefSeq" id="NP_417092.1">
    <property type="nucleotide sequence ID" value="NC_000913.3"/>
</dbReference>
<dbReference type="RefSeq" id="WP_001168037.1">
    <property type="nucleotide sequence ID" value="NZ_LN832404.1"/>
</dbReference>
<dbReference type="PDB" id="6AGL">
    <property type="method" value="X-ray"/>
    <property type="resolution" value="2.50 A"/>
    <property type="chains" value="A/B=1-356"/>
</dbReference>
<dbReference type="PDB" id="6AGM">
    <property type="method" value="X-ray"/>
    <property type="resolution" value="2.00 A"/>
    <property type="chains" value="A/B/C/D=1-355"/>
</dbReference>
<dbReference type="PDBsum" id="6AGL"/>
<dbReference type="PDBsum" id="6AGM"/>
<dbReference type="SMR" id="P00888"/>
<dbReference type="BioGRID" id="4263470">
    <property type="interactions" value="24"/>
</dbReference>
<dbReference type="BioGRID" id="851421">
    <property type="interactions" value="2"/>
</dbReference>
<dbReference type="DIP" id="DIP-9154N"/>
<dbReference type="FunCoup" id="P00888">
    <property type="interactions" value="209"/>
</dbReference>
<dbReference type="IntAct" id="P00888">
    <property type="interactions" value="3"/>
</dbReference>
<dbReference type="STRING" id="511145.b2601"/>
<dbReference type="jPOST" id="P00888"/>
<dbReference type="PaxDb" id="511145-b2601"/>
<dbReference type="EnsemblBacteria" id="AAC75650">
    <property type="protein sequence ID" value="AAC75650"/>
    <property type="gene ID" value="b2601"/>
</dbReference>
<dbReference type="GeneID" id="947084"/>
<dbReference type="KEGG" id="ecj:JW2582"/>
<dbReference type="KEGG" id="eco:b2601"/>
<dbReference type="KEGG" id="ecoc:C3026_14405"/>
<dbReference type="PATRIC" id="fig|1411691.4.peg.4138"/>
<dbReference type="EchoBASE" id="EB0076"/>
<dbReference type="eggNOG" id="COG0722">
    <property type="taxonomic scope" value="Bacteria"/>
</dbReference>
<dbReference type="HOGENOM" id="CLU_030903_0_1_6"/>
<dbReference type="InParanoid" id="P00888"/>
<dbReference type="OMA" id="QPLVMEN"/>
<dbReference type="OrthoDB" id="9807331at2"/>
<dbReference type="PhylomeDB" id="P00888"/>
<dbReference type="BioCyc" id="EcoCyc:AROF-MONOMER"/>
<dbReference type="BioCyc" id="MetaCyc:AROF-MONOMER"/>
<dbReference type="BRENDA" id="2.5.1.54">
    <property type="organism ID" value="2026"/>
</dbReference>
<dbReference type="UniPathway" id="UPA00053">
    <property type="reaction ID" value="UER00084"/>
</dbReference>
<dbReference type="PRO" id="PR:P00888"/>
<dbReference type="Proteomes" id="UP000000625">
    <property type="component" value="Chromosome"/>
</dbReference>
<dbReference type="GO" id="GO:0005737">
    <property type="term" value="C:cytoplasm"/>
    <property type="evidence" value="ECO:0000318"/>
    <property type="project" value="GO_Central"/>
</dbReference>
<dbReference type="GO" id="GO:0003849">
    <property type="term" value="F:3-deoxy-7-phosphoheptulonate synthase activity"/>
    <property type="evidence" value="ECO:0000314"/>
    <property type="project" value="EcoCyc"/>
</dbReference>
<dbReference type="GO" id="GO:0042802">
    <property type="term" value="F:identical protein binding"/>
    <property type="evidence" value="ECO:0000314"/>
    <property type="project" value="EcoCyc"/>
</dbReference>
<dbReference type="GO" id="GO:0008652">
    <property type="term" value="P:amino acid biosynthetic process"/>
    <property type="evidence" value="ECO:0007669"/>
    <property type="project" value="UniProtKB-KW"/>
</dbReference>
<dbReference type="GO" id="GO:0009073">
    <property type="term" value="P:aromatic amino acid family biosynthetic process"/>
    <property type="evidence" value="ECO:0000315"/>
    <property type="project" value="EcoCyc"/>
</dbReference>
<dbReference type="GO" id="GO:0009423">
    <property type="term" value="P:chorismate biosynthetic process"/>
    <property type="evidence" value="ECO:0007669"/>
    <property type="project" value="UniProtKB-UniPathway"/>
</dbReference>
<dbReference type="FunFam" id="3.20.20.70:FF:000005">
    <property type="entry name" value="Phospho-2-dehydro-3-deoxyheptonate aldolase"/>
    <property type="match status" value="1"/>
</dbReference>
<dbReference type="Gene3D" id="3.20.20.70">
    <property type="entry name" value="Aldolase class I"/>
    <property type="match status" value="1"/>
</dbReference>
<dbReference type="InterPro" id="IPR013785">
    <property type="entry name" value="Aldolase_TIM"/>
</dbReference>
<dbReference type="InterPro" id="IPR006218">
    <property type="entry name" value="DAHP1/KDSA"/>
</dbReference>
<dbReference type="InterPro" id="IPR006219">
    <property type="entry name" value="DAHP_synth_1"/>
</dbReference>
<dbReference type="NCBIfam" id="TIGR00034">
    <property type="entry name" value="aroFGH"/>
    <property type="match status" value="1"/>
</dbReference>
<dbReference type="NCBIfam" id="NF009395">
    <property type="entry name" value="PRK12755.1"/>
    <property type="match status" value="1"/>
</dbReference>
<dbReference type="PANTHER" id="PTHR21225">
    <property type="entry name" value="PHOSPHO-2-DEHYDRO-3-DEOXYHEPTONATE ALDOLASE DAHP SYNTHETASE"/>
    <property type="match status" value="1"/>
</dbReference>
<dbReference type="PANTHER" id="PTHR21225:SF10">
    <property type="entry name" value="PHOSPHO-2-DEHYDRO-3-DEOXYHEPTONATE ALDOLASE, TYR-SENSITIVE"/>
    <property type="match status" value="1"/>
</dbReference>
<dbReference type="Pfam" id="PF00793">
    <property type="entry name" value="DAHP_synth_1"/>
    <property type="match status" value="1"/>
</dbReference>
<dbReference type="PIRSF" id="PIRSF001361">
    <property type="entry name" value="DAHP_synthase"/>
    <property type="match status" value="1"/>
</dbReference>
<dbReference type="SUPFAM" id="SSF51569">
    <property type="entry name" value="Aldolase"/>
    <property type="match status" value="1"/>
</dbReference>
<sequence length="356" mass="38804">MQKDALNNVHITDEQVLMTPEQLKAAFPLSLQQEAQIADSRKSISDIIAGRDPRLLVVCGPCSIHDPETALEYARRFKALAAEVSDSLYLVMRVYFEKPRTTVGWKGLINDPHMDGSFDVEAGLQIARKLLLELVNMGLPLATEALDPNSPQYLGDLFSWSAIGARTTESQTHREMASGLSMPVGFKNGTDGSLATAINAMRAAAQPHRFVGINQAGQVALLQTQGNPDGHVILRGGKAPNYSPADVAQCEKEMEQAGLRPSLMVDCSHGNSNKDYRRQPAVAESVVAQIKDGNRSIIGLMIESNIHEGNQSSEQPRSEMKYGVSVTDACISWEMTDALLREIHQDLNGQLTARVA</sequence>
<reference key="1">
    <citation type="journal article" date="1984" name="J. Biol. Chem.">
        <title>The nucleotide sequence of the aroF gene of Escherichia coli and the amino acid sequence of the encoded protein, the tyrosine-sensitive 3-deoxy-D-arabino-heptulosonate 7-phosphate synthase.</title>
        <authorList>
            <person name="Shultz J."/>
            <person name="Hermodson M.A."/>
            <person name="Garner C.C."/>
            <person name="Herrmann K.M."/>
        </authorList>
    </citation>
    <scope>NUCLEOTIDE SEQUENCE [GENOMIC DNA]</scope>
</reference>
<reference key="2">
    <citation type="journal article" date="1984" name="J. Mol. Biol.">
        <title>Nucleotide sequence and transcription of the phenylalanine and tyrosine operons of Escherichia coli K12.</title>
        <authorList>
            <person name="Hudson G.S."/>
            <person name="Davidson B.E."/>
        </authorList>
    </citation>
    <scope>NUCLEOTIDE SEQUENCE [GENOMIC DNA]</scope>
</reference>
<reference key="3">
    <citation type="journal article" date="1997" name="DNA Res.">
        <title>Construction of a contiguous 874-kb sequence of the Escherichia coli-K12 genome corresponding to 50.0-68.8 min on the linkage map and analysis of its sequence features.</title>
        <authorList>
            <person name="Yamamoto Y."/>
            <person name="Aiba H."/>
            <person name="Baba T."/>
            <person name="Hayashi K."/>
            <person name="Inada T."/>
            <person name="Isono K."/>
            <person name="Itoh T."/>
            <person name="Kimura S."/>
            <person name="Kitagawa M."/>
            <person name="Makino K."/>
            <person name="Miki T."/>
            <person name="Mitsuhashi N."/>
            <person name="Mizobuchi K."/>
            <person name="Mori H."/>
            <person name="Nakade S."/>
            <person name="Nakamura Y."/>
            <person name="Nashimoto H."/>
            <person name="Oshima T."/>
            <person name="Oyama S."/>
            <person name="Saito N."/>
            <person name="Sampei G."/>
            <person name="Satoh Y."/>
            <person name="Sivasundaram S."/>
            <person name="Tagami H."/>
            <person name="Takahashi H."/>
            <person name="Takeda J."/>
            <person name="Takemoto K."/>
            <person name="Uehara K."/>
            <person name="Wada C."/>
            <person name="Yamagata S."/>
            <person name="Horiuchi T."/>
        </authorList>
    </citation>
    <scope>NUCLEOTIDE SEQUENCE [LARGE SCALE GENOMIC DNA]</scope>
    <source>
        <strain>K12 / W3110 / ATCC 27325 / DSM 5911</strain>
    </source>
</reference>
<reference key="4">
    <citation type="journal article" date="1997" name="Science">
        <title>The complete genome sequence of Escherichia coli K-12.</title>
        <authorList>
            <person name="Blattner F.R."/>
            <person name="Plunkett G. III"/>
            <person name="Bloch C.A."/>
            <person name="Perna N.T."/>
            <person name="Burland V."/>
            <person name="Riley M."/>
            <person name="Collado-Vides J."/>
            <person name="Glasner J.D."/>
            <person name="Rode C.K."/>
            <person name="Mayhew G.F."/>
            <person name="Gregor J."/>
            <person name="Davis N.W."/>
            <person name="Kirkpatrick H.A."/>
            <person name="Goeden M.A."/>
            <person name="Rose D.J."/>
            <person name="Mau B."/>
            <person name="Shao Y."/>
        </authorList>
    </citation>
    <scope>NUCLEOTIDE SEQUENCE [LARGE SCALE GENOMIC DNA]</scope>
    <source>
        <strain>K12 / MG1655 / ATCC 47076</strain>
    </source>
</reference>
<reference key="5">
    <citation type="journal article" date="2006" name="Mol. Syst. Biol.">
        <title>Highly accurate genome sequences of Escherichia coli K-12 strains MG1655 and W3110.</title>
        <authorList>
            <person name="Hayashi K."/>
            <person name="Morooka N."/>
            <person name="Yamamoto Y."/>
            <person name="Fujita K."/>
            <person name="Isono K."/>
            <person name="Choi S."/>
            <person name="Ohtsubo E."/>
            <person name="Baba T."/>
            <person name="Wanner B.L."/>
            <person name="Mori H."/>
            <person name="Horiuchi T."/>
        </authorList>
    </citation>
    <scope>NUCLEOTIDE SEQUENCE [LARGE SCALE GENOMIC DNA]</scope>
    <source>
        <strain>K12 / W3110 / ATCC 27325 / DSM 5911</strain>
    </source>
</reference>
<reference key="6">
    <citation type="journal article" date="1990" name="J. Bacteriol.">
        <title>Cloning of an aroF allele encoding a tyrosine-insensitive 3-deoxy-D-arabino-heptulosonate 7-phosphate synthase.</title>
        <authorList>
            <person name="Weaver L.M."/>
            <person name="Herrmann K.M."/>
        </authorList>
    </citation>
    <scope>NUCLEOTIDE SEQUENCE [GENOMIC DNA] OF 124-187</scope>
</reference>
<reference key="7">
    <citation type="journal article" date="1980" name="J. Biol. Chem.">
        <title>Sequence homology between the tyrosine-sensitive 3-deoxy-D-arabino-heptulosonate 7-phosphate synthase from Escherichia coli and hemerythrin from Sipunculida.</title>
        <authorList>
            <person name="Herrmann K.M."/>
            <person name="Shultz J."/>
            <person name="Hermodson M.A."/>
        </authorList>
    </citation>
    <scope>PROTEIN SEQUENCE OF 1-30</scope>
</reference>
<reference key="8">
    <citation type="journal article" date="1985" name="J. Biol. Chem.">
        <title>Operator mutations of the Escherichia coli aroF gene.</title>
        <authorList>
            <person name="Garner C.C."/>
            <person name="Herrmann K.M."/>
        </authorList>
    </citation>
    <scope>NUCLEOTIDE SEQUENCE [GENOMIC DNA] OF 1-6</scope>
</reference>
<reference key="9">
    <citation type="journal article" date="1997" name="Electrophoresis">
        <title>Escherichia coli proteome analysis using the gene-protein database.</title>
        <authorList>
            <person name="VanBogelen R.A."/>
            <person name="Abshire K.Z."/>
            <person name="Moldover B."/>
            <person name="Olson E.R."/>
            <person name="Neidhardt F.C."/>
        </authorList>
    </citation>
    <scope>IDENTIFICATION BY 2D-GEL</scope>
</reference>
<reference key="10">
    <citation type="journal article" date="1997" name="Protein Expr. Purif.">
        <title>Overexpression, purification, and characterization of tyrosine-sensitive 3-deoxy-D-arabino-heptulosonic acid 7-phosphate synthase from Escherichia coli.</title>
        <authorList>
            <person name="Ramilo C.A."/>
            <person name="Evans J.N."/>
        </authorList>
    </citation>
    <scope>CHARACTERIZATION</scope>
</reference>
<gene>
    <name type="primary">aroF</name>
    <name type="ordered locus">b2601</name>
    <name type="ordered locus">JW2582</name>
</gene>
<evidence type="ECO:0000305" key="1"/>
<evidence type="ECO:0007829" key="2">
    <source>
        <dbReference type="PDB" id="6AGM"/>
    </source>
</evidence>
<proteinExistence type="evidence at protein level"/>
<comment type="function">
    <text>Stereospecific condensation of phosphoenolpyruvate (PEP) and D-erythrose-4-phosphate (E4P) giving rise to 3-deoxy-D-arabino-heptulosonate-7-phosphate (DAHP).</text>
</comment>
<comment type="catalytic activity">
    <reaction>
        <text>D-erythrose 4-phosphate + phosphoenolpyruvate + H2O = 7-phospho-2-dehydro-3-deoxy-D-arabino-heptonate + phosphate</text>
        <dbReference type="Rhea" id="RHEA:14717"/>
        <dbReference type="ChEBI" id="CHEBI:15377"/>
        <dbReference type="ChEBI" id="CHEBI:16897"/>
        <dbReference type="ChEBI" id="CHEBI:43474"/>
        <dbReference type="ChEBI" id="CHEBI:58394"/>
        <dbReference type="ChEBI" id="CHEBI:58702"/>
        <dbReference type="EC" id="2.5.1.54"/>
    </reaction>
</comment>
<comment type="cofactor">
    <cofactor>
        <name>a divalent metal cation</name>
        <dbReference type="ChEBI" id="CHEBI:60240"/>
    </cofactor>
</comment>
<comment type="activity regulation">
    <text>Specifically feedback inhibited by tyrosine with 50% inhibition observed at 9 microM tyrosine, pH 7.0.</text>
</comment>
<comment type="pathway">
    <text>Metabolic intermediate biosynthesis; chorismate biosynthesis; chorismate from D-erythrose 4-phosphate and phosphoenolpyruvate: step 1/7.</text>
</comment>
<comment type="miscellaneous">
    <text>There are 3 DAHP synthases, AroF is feedback-inhibited by Tyr. The other 2 DAHP synthases are Phe- and Trp-sensitive, respectively.</text>
</comment>
<comment type="similarity">
    <text evidence="1">Belongs to the class-I DAHP synthase family.</text>
</comment>
<protein>
    <recommendedName>
        <fullName>Phospho-2-dehydro-3-deoxyheptonate aldolase, Tyr-sensitive</fullName>
        <ecNumber>2.5.1.54</ecNumber>
    </recommendedName>
    <alternativeName>
        <fullName>3-deoxy-D-arabino-heptulosonate 7-phosphate synthase</fullName>
    </alternativeName>
    <alternativeName>
        <fullName>DAHP synthase</fullName>
    </alternativeName>
    <alternativeName>
        <fullName>Phospho-2-keto-3-deoxyheptonate aldolase</fullName>
    </alternativeName>
</protein>
<feature type="chain" id="PRO_0000140831" description="Phospho-2-dehydro-3-deoxyheptonate aldolase, Tyr-sensitive">
    <location>
        <begin position="1"/>
        <end position="356"/>
    </location>
</feature>
<feature type="strand" evidence="2">
    <location>
        <begin position="6"/>
        <end position="8"/>
    </location>
</feature>
<feature type="helix" evidence="2">
    <location>
        <begin position="20"/>
        <end position="26"/>
    </location>
</feature>
<feature type="helix" evidence="2">
    <location>
        <begin position="31"/>
        <end position="48"/>
    </location>
</feature>
<feature type="strand" evidence="2">
    <location>
        <begin position="54"/>
        <end position="60"/>
    </location>
</feature>
<feature type="helix" evidence="2">
    <location>
        <begin position="67"/>
        <end position="84"/>
    </location>
</feature>
<feature type="turn" evidence="2">
    <location>
        <begin position="85"/>
        <end position="87"/>
    </location>
</feature>
<feature type="strand" evidence="2">
    <location>
        <begin position="88"/>
        <end position="93"/>
    </location>
</feature>
<feature type="strand" evidence="2">
    <location>
        <begin position="102"/>
        <end position="104"/>
    </location>
</feature>
<feature type="helix" evidence="2">
    <location>
        <begin position="107"/>
        <end position="110"/>
    </location>
</feature>
<feature type="strand" evidence="2">
    <location>
        <begin position="114"/>
        <end position="116"/>
    </location>
</feature>
<feature type="helix" evidence="2">
    <location>
        <begin position="120"/>
        <end position="136"/>
    </location>
</feature>
<feature type="strand" evidence="2">
    <location>
        <begin position="141"/>
        <end position="145"/>
    </location>
</feature>
<feature type="strand" evidence="2">
    <location>
        <begin position="147"/>
        <end position="149"/>
    </location>
</feature>
<feature type="helix" evidence="2">
    <location>
        <begin position="150"/>
        <end position="154"/>
    </location>
</feature>
<feature type="helix" evidence="2">
    <location>
        <begin position="155"/>
        <end position="157"/>
    </location>
</feature>
<feature type="strand" evidence="2">
    <location>
        <begin position="159"/>
        <end position="163"/>
    </location>
</feature>
<feature type="helix" evidence="2">
    <location>
        <begin position="165"/>
        <end position="168"/>
    </location>
</feature>
<feature type="strand" evidence="2">
    <location>
        <begin position="171"/>
        <end position="173"/>
    </location>
</feature>
<feature type="helix" evidence="2">
    <location>
        <begin position="176"/>
        <end position="179"/>
    </location>
</feature>
<feature type="strand" evidence="2">
    <location>
        <begin position="184"/>
        <end position="187"/>
    </location>
</feature>
<feature type="helix" evidence="2">
    <location>
        <begin position="195"/>
        <end position="204"/>
    </location>
</feature>
<feature type="strand" evidence="2">
    <location>
        <begin position="209"/>
        <end position="213"/>
    </location>
</feature>
<feature type="strand" evidence="2">
    <location>
        <begin position="219"/>
        <end position="223"/>
    </location>
</feature>
<feature type="strand" evidence="2">
    <location>
        <begin position="230"/>
        <end position="234"/>
    </location>
</feature>
<feature type="strand" evidence="2">
    <location>
        <begin position="237"/>
        <end position="239"/>
    </location>
</feature>
<feature type="helix" evidence="2">
    <location>
        <begin position="244"/>
        <end position="256"/>
    </location>
</feature>
<feature type="strand" evidence="2">
    <location>
        <begin position="263"/>
        <end position="268"/>
    </location>
</feature>
<feature type="helix" evidence="2">
    <location>
        <begin position="269"/>
        <end position="272"/>
    </location>
</feature>
<feature type="helix" evidence="2">
    <location>
        <begin position="276"/>
        <end position="278"/>
    </location>
</feature>
<feature type="helix" evidence="2">
    <location>
        <begin position="279"/>
        <end position="291"/>
    </location>
</feature>
<feature type="strand" evidence="2">
    <location>
        <begin position="296"/>
        <end position="304"/>
    </location>
</feature>
<feature type="helix" evidence="2">
    <location>
        <begin position="333"/>
        <end position="347"/>
    </location>
</feature>
<feature type="turn" evidence="2">
    <location>
        <begin position="348"/>
        <end position="354"/>
    </location>
</feature>
<keyword id="KW-0002">3D-structure</keyword>
<keyword id="KW-0028">Amino-acid biosynthesis</keyword>
<keyword id="KW-0057">Aromatic amino acid biosynthesis</keyword>
<keyword id="KW-0903">Direct protein sequencing</keyword>
<keyword id="KW-1185">Reference proteome</keyword>
<keyword id="KW-0808">Transferase</keyword>